<reference key="1">
    <citation type="journal article" date="2005" name="Proc. Natl. Acad. Sci. U.S.A.">
        <title>The psychrophilic lifestyle as revealed by the genome sequence of Colwellia psychrerythraea 34H through genomic and proteomic analyses.</title>
        <authorList>
            <person name="Methe B.A."/>
            <person name="Nelson K.E."/>
            <person name="Deming J.W."/>
            <person name="Momen B."/>
            <person name="Melamud E."/>
            <person name="Zhang X."/>
            <person name="Moult J."/>
            <person name="Madupu R."/>
            <person name="Nelson W.C."/>
            <person name="Dodson R.J."/>
            <person name="Brinkac L.M."/>
            <person name="Daugherty S.C."/>
            <person name="Durkin A.S."/>
            <person name="DeBoy R.T."/>
            <person name="Kolonay J.F."/>
            <person name="Sullivan S.A."/>
            <person name="Zhou L."/>
            <person name="Davidsen T.M."/>
            <person name="Wu M."/>
            <person name="Huston A.L."/>
            <person name="Lewis M."/>
            <person name="Weaver B."/>
            <person name="Weidman J.F."/>
            <person name="Khouri H."/>
            <person name="Utterback T.R."/>
            <person name="Feldblyum T.V."/>
            <person name="Fraser C.M."/>
        </authorList>
    </citation>
    <scope>NUCLEOTIDE SEQUENCE [LARGE SCALE GENOMIC DNA]</scope>
    <source>
        <strain>34H / ATCC BAA-681</strain>
    </source>
</reference>
<organism>
    <name type="scientific">Colwellia psychrerythraea (strain 34H / ATCC BAA-681)</name>
    <name type="common">Vibrio psychroerythus</name>
    <dbReference type="NCBI Taxonomy" id="167879"/>
    <lineage>
        <taxon>Bacteria</taxon>
        <taxon>Pseudomonadati</taxon>
        <taxon>Pseudomonadota</taxon>
        <taxon>Gammaproteobacteria</taxon>
        <taxon>Alteromonadales</taxon>
        <taxon>Colwelliaceae</taxon>
        <taxon>Colwellia</taxon>
    </lineage>
</organism>
<dbReference type="EMBL" id="CP000083">
    <property type="protein sequence ID" value="AAZ27897.1"/>
    <property type="molecule type" value="Genomic_DNA"/>
</dbReference>
<dbReference type="RefSeq" id="WP_011043268.1">
    <property type="nucleotide sequence ID" value="NC_003910.7"/>
</dbReference>
<dbReference type="SMR" id="Q481U4"/>
<dbReference type="STRING" id="167879.CPS_2458"/>
<dbReference type="KEGG" id="cps:CPS_2458"/>
<dbReference type="HOGENOM" id="CLU_117144_1_2_6"/>
<dbReference type="Proteomes" id="UP000000547">
    <property type="component" value="Chromosome"/>
</dbReference>
<dbReference type="Gene3D" id="3.30.110.70">
    <property type="entry name" value="Hypothetical protein apc22750. Chain B"/>
    <property type="match status" value="1"/>
</dbReference>
<dbReference type="HAMAP" id="MF_00338">
    <property type="entry name" value="UPF0145"/>
    <property type="match status" value="1"/>
</dbReference>
<dbReference type="InterPro" id="IPR035439">
    <property type="entry name" value="UPF0145_dom_sf"/>
</dbReference>
<dbReference type="InterPro" id="IPR002765">
    <property type="entry name" value="UPF0145_YbjQ-like"/>
</dbReference>
<dbReference type="PANTHER" id="PTHR34068:SF2">
    <property type="entry name" value="UPF0145 PROTEIN SCO3412"/>
    <property type="match status" value="1"/>
</dbReference>
<dbReference type="PANTHER" id="PTHR34068">
    <property type="entry name" value="UPF0145 PROTEIN YBJQ"/>
    <property type="match status" value="1"/>
</dbReference>
<dbReference type="Pfam" id="PF01906">
    <property type="entry name" value="YbjQ_1"/>
    <property type="match status" value="1"/>
</dbReference>
<dbReference type="SUPFAM" id="SSF117782">
    <property type="entry name" value="YbjQ-like"/>
    <property type="match status" value="1"/>
</dbReference>
<proteinExistence type="inferred from homology"/>
<name>Y2458_COLP3</name>
<gene>
    <name type="ordered locus">CPS_2458</name>
</gene>
<protein>
    <recommendedName>
        <fullName evidence="1">UPF0145 protein CPS_2458</fullName>
    </recommendedName>
</protein>
<evidence type="ECO:0000255" key="1">
    <source>
        <dbReference type="HAMAP-Rule" id="MF_00338"/>
    </source>
</evidence>
<sequence>MIYSTTESIPGKEIEEIVGVVTGNVVQAKHIGRDIMAGLKSIVGGEIRGYTEMLTDARDIAIQRLVANAEEKGADAVVGIRFTTSAIMDGSSEIMVFGTAVKLKK</sequence>
<comment type="similarity">
    <text evidence="1">Belongs to the UPF0145 family.</text>
</comment>
<accession>Q481U4</accession>
<feature type="chain" id="PRO_0000225821" description="UPF0145 protein CPS_2458">
    <location>
        <begin position="1"/>
        <end position="105"/>
    </location>
</feature>